<accession>A6UP51</accession>
<organism>
    <name type="scientific">Methanococcus vannielii (strain ATCC 35089 / DSM 1224 / JCM 13029 / OCM 148 / SB)</name>
    <dbReference type="NCBI Taxonomy" id="406327"/>
    <lineage>
        <taxon>Archaea</taxon>
        <taxon>Methanobacteriati</taxon>
        <taxon>Methanobacteriota</taxon>
        <taxon>Methanomada group</taxon>
        <taxon>Methanococci</taxon>
        <taxon>Methanococcales</taxon>
        <taxon>Methanococcaceae</taxon>
        <taxon>Methanococcus</taxon>
    </lineage>
</organism>
<sequence length="203" mass="22949">MGAEKITSKIMEDAKIQANVILAEAQKEKEALIKKAHEEAEKKKQAILKKGEKDAEMTRNRILAEARLSAKKNSLEERERTIAKAIQKLEEDLVKLPQKDEYKDILLKMIITGVYSVGGGELDLQLNKNDWKLIDDSTLWALEKEMEDRLKKVTVLKKGESLPIIGGCVVKTADKTKVSDNSLEATFERNLDIIRAKIAEMLF</sequence>
<comment type="function">
    <text evidence="1">Component of the A-type ATP synthase that produces ATP from ADP in the presence of a proton gradient across the membrane.</text>
</comment>
<comment type="subunit">
    <text evidence="1">Has multiple subunits with at least A(3), B(3), C, D, E, F, H, I and proteolipid K(x).</text>
</comment>
<comment type="subcellular location">
    <subcellularLocation>
        <location evidence="1">Cell membrane</location>
        <topology evidence="1">Peripheral membrane protein</topology>
    </subcellularLocation>
</comment>
<comment type="similarity">
    <text evidence="1">Belongs to the V-ATPase E subunit family.</text>
</comment>
<keyword id="KW-0066">ATP synthesis</keyword>
<keyword id="KW-1003">Cell membrane</keyword>
<keyword id="KW-0375">Hydrogen ion transport</keyword>
<keyword id="KW-0406">Ion transport</keyword>
<keyword id="KW-0472">Membrane</keyword>
<keyword id="KW-0813">Transport</keyword>
<reference key="1">
    <citation type="submission" date="2007-06" db="EMBL/GenBank/DDBJ databases">
        <title>Complete sequence of Methanococcus vannielii SB.</title>
        <authorList>
            <consortium name="US DOE Joint Genome Institute"/>
            <person name="Copeland A."/>
            <person name="Lucas S."/>
            <person name="Lapidus A."/>
            <person name="Barry K."/>
            <person name="Glavina del Rio T."/>
            <person name="Dalin E."/>
            <person name="Tice H."/>
            <person name="Pitluck S."/>
            <person name="Chain P."/>
            <person name="Malfatti S."/>
            <person name="Shin M."/>
            <person name="Vergez L."/>
            <person name="Schmutz J."/>
            <person name="Larimer F."/>
            <person name="Land M."/>
            <person name="Hauser L."/>
            <person name="Kyrpides N."/>
            <person name="Anderson I."/>
            <person name="Sieprawska-Lupa M."/>
            <person name="Whitman W.B."/>
            <person name="Richardson P."/>
        </authorList>
    </citation>
    <scope>NUCLEOTIDE SEQUENCE [LARGE SCALE GENOMIC DNA]</scope>
    <source>
        <strain>ATCC 35089 / DSM 1224 / JCM 13029 / OCM 148 / SB</strain>
    </source>
</reference>
<dbReference type="EMBL" id="CP000742">
    <property type="protein sequence ID" value="ABR54273.1"/>
    <property type="molecule type" value="Genomic_DNA"/>
</dbReference>
<dbReference type="RefSeq" id="WP_011972176.1">
    <property type="nucleotide sequence ID" value="NC_009634.1"/>
</dbReference>
<dbReference type="SMR" id="A6UP51"/>
<dbReference type="STRING" id="406327.Mevan_0364"/>
<dbReference type="GeneID" id="5325805"/>
<dbReference type="KEGG" id="mvn:Mevan_0364"/>
<dbReference type="eggNOG" id="arCOG00869">
    <property type="taxonomic scope" value="Archaea"/>
</dbReference>
<dbReference type="HOGENOM" id="CLU_105846_1_0_2"/>
<dbReference type="OrthoDB" id="4691at2157"/>
<dbReference type="Proteomes" id="UP000001107">
    <property type="component" value="Chromosome"/>
</dbReference>
<dbReference type="GO" id="GO:0005886">
    <property type="term" value="C:plasma membrane"/>
    <property type="evidence" value="ECO:0007669"/>
    <property type="project" value="UniProtKB-SubCell"/>
</dbReference>
<dbReference type="GO" id="GO:0033178">
    <property type="term" value="C:proton-transporting two-sector ATPase complex, catalytic domain"/>
    <property type="evidence" value="ECO:0007669"/>
    <property type="project" value="InterPro"/>
</dbReference>
<dbReference type="GO" id="GO:0005524">
    <property type="term" value="F:ATP binding"/>
    <property type="evidence" value="ECO:0007669"/>
    <property type="project" value="UniProtKB-UniRule"/>
</dbReference>
<dbReference type="GO" id="GO:0046933">
    <property type="term" value="F:proton-transporting ATP synthase activity, rotational mechanism"/>
    <property type="evidence" value="ECO:0007669"/>
    <property type="project" value="UniProtKB-UniRule"/>
</dbReference>
<dbReference type="GO" id="GO:0046961">
    <property type="term" value="F:proton-transporting ATPase activity, rotational mechanism"/>
    <property type="evidence" value="ECO:0007669"/>
    <property type="project" value="InterPro"/>
</dbReference>
<dbReference type="GO" id="GO:0042777">
    <property type="term" value="P:proton motive force-driven plasma membrane ATP synthesis"/>
    <property type="evidence" value="ECO:0007669"/>
    <property type="project" value="UniProtKB-UniRule"/>
</dbReference>
<dbReference type="Gene3D" id="3.30.2320.30">
    <property type="entry name" value="ATP synthase, E subunit, C-terminal"/>
    <property type="match status" value="1"/>
</dbReference>
<dbReference type="Gene3D" id="1.20.5.620">
    <property type="entry name" value="F1F0 ATP synthase subunit B, membrane domain"/>
    <property type="match status" value="1"/>
</dbReference>
<dbReference type="HAMAP" id="MF_00311">
    <property type="entry name" value="ATP_synth_E_arch"/>
    <property type="match status" value="1"/>
</dbReference>
<dbReference type="InterPro" id="IPR028987">
    <property type="entry name" value="ATP_synth_B-like_membr_sf"/>
</dbReference>
<dbReference type="InterPro" id="IPR038495">
    <property type="entry name" value="ATPase_E_C"/>
</dbReference>
<dbReference type="InterPro" id="IPR002842">
    <property type="entry name" value="ATPase_V1_Esu"/>
</dbReference>
<dbReference type="PANTHER" id="PTHR45715">
    <property type="entry name" value="ATPASE H+-TRANSPORTING V1 SUBUNIT E1A-RELATED"/>
    <property type="match status" value="1"/>
</dbReference>
<dbReference type="Pfam" id="PF01991">
    <property type="entry name" value="vATP-synt_E"/>
    <property type="match status" value="1"/>
</dbReference>
<dbReference type="SUPFAM" id="SSF81573">
    <property type="entry name" value="F1F0 ATP synthase subunit B, membrane domain"/>
    <property type="match status" value="1"/>
</dbReference>
<dbReference type="SUPFAM" id="SSF160527">
    <property type="entry name" value="V-type ATPase subunit E-like"/>
    <property type="match status" value="1"/>
</dbReference>
<feature type="chain" id="PRO_1000059419" description="A-type ATP synthase subunit E">
    <location>
        <begin position="1"/>
        <end position="203"/>
    </location>
</feature>
<gene>
    <name evidence="1" type="primary">atpE</name>
    <name type="ordered locus">Mevan_0364</name>
</gene>
<proteinExistence type="inferred from homology"/>
<name>AATE_METVS</name>
<evidence type="ECO:0000255" key="1">
    <source>
        <dbReference type="HAMAP-Rule" id="MF_00311"/>
    </source>
</evidence>
<protein>
    <recommendedName>
        <fullName evidence="1">A-type ATP synthase subunit E</fullName>
    </recommendedName>
</protein>